<feature type="initiator methionine" description="Removed" evidence="1">
    <location>
        <position position="1"/>
    </location>
</feature>
<feature type="chain" id="PRO_0000201169" description="2Fe-2S ferredoxin">
    <location>
        <begin position="2"/>
        <end position="111"/>
    </location>
</feature>
<feature type="domain" description="2Fe-2S ferredoxin-type" evidence="2">
    <location>
        <begin position="2"/>
        <end position="104"/>
    </location>
</feature>
<feature type="binding site" evidence="2">
    <location>
        <position position="42"/>
    </location>
    <ligand>
        <name>[2Fe-2S] cluster</name>
        <dbReference type="ChEBI" id="CHEBI:190135"/>
    </ligand>
</feature>
<feature type="binding site" evidence="2">
    <location>
        <position position="48"/>
    </location>
    <ligand>
        <name>[2Fe-2S] cluster</name>
        <dbReference type="ChEBI" id="CHEBI:190135"/>
    </ligand>
</feature>
<feature type="binding site" evidence="2">
    <location>
        <position position="51"/>
    </location>
    <ligand>
        <name>[2Fe-2S] cluster</name>
        <dbReference type="ChEBI" id="CHEBI:190135"/>
    </ligand>
</feature>
<feature type="binding site" evidence="2">
    <location>
        <position position="87"/>
    </location>
    <ligand>
        <name>[2Fe-2S] cluster</name>
        <dbReference type="ChEBI" id="CHEBI:190135"/>
    </ligand>
</feature>
<gene>
    <name type="primary">fdx</name>
    <name type="ordered locus">Z3792</name>
    <name type="ordered locus">ECs3391</name>
</gene>
<accession>P0A9R5</accession>
<accession>P25528</accession>
<organism>
    <name type="scientific">Escherichia coli O157:H7</name>
    <dbReference type="NCBI Taxonomy" id="83334"/>
    <lineage>
        <taxon>Bacteria</taxon>
        <taxon>Pseudomonadati</taxon>
        <taxon>Pseudomonadota</taxon>
        <taxon>Gammaproteobacteria</taxon>
        <taxon>Enterobacterales</taxon>
        <taxon>Enterobacteriaceae</taxon>
        <taxon>Escherichia</taxon>
    </lineage>
</organism>
<proteinExistence type="inferred from homology"/>
<reference key="1">
    <citation type="journal article" date="2001" name="Nature">
        <title>Genome sequence of enterohaemorrhagic Escherichia coli O157:H7.</title>
        <authorList>
            <person name="Perna N.T."/>
            <person name="Plunkett G. III"/>
            <person name="Burland V."/>
            <person name="Mau B."/>
            <person name="Glasner J.D."/>
            <person name="Rose D.J."/>
            <person name="Mayhew G.F."/>
            <person name="Evans P.S."/>
            <person name="Gregor J."/>
            <person name="Kirkpatrick H.A."/>
            <person name="Posfai G."/>
            <person name="Hackett J."/>
            <person name="Klink S."/>
            <person name="Boutin A."/>
            <person name="Shao Y."/>
            <person name="Miller L."/>
            <person name="Grotbeck E.J."/>
            <person name="Davis N.W."/>
            <person name="Lim A."/>
            <person name="Dimalanta E.T."/>
            <person name="Potamousis K."/>
            <person name="Apodaca J."/>
            <person name="Anantharaman T.S."/>
            <person name="Lin J."/>
            <person name="Yen G."/>
            <person name="Schwartz D.C."/>
            <person name="Welch R.A."/>
            <person name="Blattner F.R."/>
        </authorList>
    </citation>
    <scope>NUCLEOTIDE SEQUENCE [LARGE SCALE GENOMIC DNA]</scope>
    <source>
        <strain>O157:H7 / EDL933 / ATCC 700927 / EHEC</strain>
    </source>
</reference>
<reference key="2">
    <citation type="journal article" date="2001" name="DNA Res.">
        <title>Complete genome sequence of enterohemorrhagic Escherichia coli O157:H7 and genomic comparison with a laboratory strain K-12.</title>
        <authorList>
            <person name="Hayashi T."/>
            <person name="Makino K."/>
            <person name="Ohnishi M."/>
            <person name="Kurokawa K."/>
            <person name="Ishii K."/>
            <person name="Yokoyama K."/>
            <person name="Han C.-G."/>
            <person name="Ohtsubo E."/>
            <person name="Nakayama K."/>
            <person name="Murata T."/>
            <person name="Tanaka M."/>
            <person name="Tobe T."/>
            <person name="Iida T."/>
            <person name="Takami H."/>
            <person name="Honda T."/>
            <person name="Sasakawa C."/>
            <person name="Ogasawara N."/>
            <person name="Yasunaga T."/>
            <person name="Kuhara S."/>
            <person name="Shiba T."/>
            <person name="Hattori M."/>
            <person name="Shinagawa H."/>
        </authorList>
    </citation>
    <scope>NUCLEOTIDE SEQUENCE [LARGE SCALE GENOMIC DNA]</scope>
    <source>
        <strain>O157:H7 / Sakai / RIMD 0509952 / EHEC</strain>
    </source>
</reference>
<protein>
    <recommendedName>
        <fullName>2Fe-2S ferredoxin</fullName>
    </recommendedName>
</protein>
<dbReference type="EMBL" id="AE005174">
    <property type="protein sequence ID" value="AAG57639.1"/>
    <property type="molecule type" value="Genomic_DNA"/>
</dbReference>
<dbReference type="EMBL" id="BA000007">
    <property type="protein sequence ID" value="BAB36814.1"/>
    <property type="molecule type" value="Genomic_DNA"/>
</dbReference>
<dbReference type="PIR" id="C85897">
    <property type="entry name" value="C85897"/>
</dbReference>
<dbReference type="PIR" id="G91052">
    <property type="entry name" value="G91052"/>
</dbReference>
<dbReference type="RefSeq" id="NP_311418.1">
    <property type="nucleotide sequence ID" value="NC_002695.1"/>
</dbReference>
<dbReference type="RefSeq" id="WP_001124469.1">
    <property type="nucleotide sequence ID" value="NZ_VOAI01000001.1"/>
</dbReference>
<dbReference type="BMRB" id="P0A9R5"/>
<dbReference type="SMR" id="P0A9R5"/>
<dbReference type="MINT" id="P0A9R5"/>
<dbReference type="STRING" id="155864.Z3792"/>
<dbReference type="GeneID" id="917117"/>
<dbReference type="GeneID" id="93774611"/>
<dbReference type="KEGG" id="ece:Z3792"/>
<dbReference type="KEGG" id="ecs:ECs_3391"/>
<dbReference type="PATRIC" id="fig|386585.9.peg.3542"/>
<dbReference type="eggNOG" id="COG0633">
    <property type="taxonomic scope" value="Bacteria"/>
</dbReference>
<dbReference type="HOGENOM" id="CLU_082632_5_2_6"/>
<dbReference type="OMA" id="TCHCIIR"/>
<dbReference type="Proteomes" id="UP000000558">
    <property type="component" value="Chromosome"/>
</dbReference>
<dbReference type="Proteomes" id="UP000002519">
    <property type="component" value="Chromosome"/>
</dbReference>
<dbReference type="GO" id="GO:0005829">
    <property type="term" value="C:cytosol"/>
    <property type="evidence" value="ECO:0007669"/>
    <property type="project" value="TreeGrafter"/>
</dbReference>
<dbReference type="GO" id="GO:0051537">
    <property type="term" value="F:2 iron, 2 sulfur cluster binding"/>
    <property type="evidence" value="ECO:0007669"/>
    <property type="project" value="UniProtKB-KW"/>
</dbReference>
<dbReference type="GO" id="GO:0009055">
    <property type="term" value="F:electron transfer activity"/>
    <property type="evidence" value="ECO:0007669"/>
    <property type="project" value="InterPro"/>
</dbReference>
<dbReference type="GO" id="GO:0046872">
    <property type="term" value="F:metal ion binding"/>
    <property type="evidence" value="ECO:0007669"/>
    <property type="project" value="UniProtKB-KW"/>
</dbReference>
<dbReference type="GO" id="GO:0140647">
    <property type="term" value="P:P450-containing electron transport chain"/>
    <property type="evidence" value="ECO:0007669"/>
    <property type="project" value="InterPro"/>
</dbReference>
<dbReference type="CDD" id="cd00207">
    <property type="entry name" value="fer2"/>
    <property type="match status" value="1"/>
</dbReference>
<dbReference type="FunFam" id="3.10.20.30:FF:000008">
    <property type="entry name" value="Ferredoxin, 2Fe-2S type, ISC system"/>
    <property type="match status" value="1"/>
</dbReference>
<dbReference type="Gene3D" id="3.10.20.30">
    <property type="match status" value="1"/>
</dbReference>
<dbReference type="InterPro" id="IPR036010">
    <property type="entry name" value="2Fe-2S_ferredoxin-like_sf"/>
</dbReference>
<dbReference type="InterPro" id="IPR001041">
    <property type="entry name" value="2Fe-2S_ferredoxin-type"/>
</dbReference>
<dbReference type="InterPro" id="IPR001055">
    <property type="entry name" value="Adrenodoxin-like"/>
</dbReference>
<dbReference type="InterPro" id="IPR018298">
    <property type="entry name" value="Adrenodoxin_Fe-S_BS"/>
</dbReference>
<dbReference type="InterPro" id="IPR012675">
    <property type="entry name" value="Beta-grasp_dom_sf"/>
</dbReference>
<dbReference type="InterPro" id="IPR011536">
    <property type="entry name" value="Fdx_isc"/>
</dbReference>
<dbReference type="NCBIfam" id="TIGR02007">
    <property type="entry name" value="fdx_isc"/>
    <property type="match status" value="1"/>
</dbReference>
<dbReference type="PANTHER" id="PTHR23426:SF65">
    <property type="entry name" value="FERREDOXIN-2, MITOCHONDRIAL"/>
    <property type="match status" value="1"/>
</dbReference>
<dbReference type="PANTHER" id="PTHR23426">
    <property type="entry name" value="FERREDOXIN/ADRENODOXIN"/>
    <property type="match status" value="1"/>
</dbReference>
<dbReference type="Pfam" id="PF00111">
    <property type="entry name" value="Fer2"/>
    <property type="match status" value="1"/>
</dbReference>
<dbReference type="PRINTS" id="PR00355">
    <property type="entry name" value="ADRENODOXIN"/>
</dbReference>
<dbReference type="SUPFAM" id="SSF54292">
    <property type="entry name" value="2Fe-2S ferredoxin-like"/>
    <property type="match status" value="1"/>
</dbReference>
<dbReference type="PROSITE" id="PS51085">
    <property type="entry name" value="2FE2S_FER_2"/>
    <property type="match status" value="1"/>
</dbReference>
<dbReference type="PROSITE" id="PS00814">
    <property type="entry name" value="ADX"/>
    <property type="match status" value="1"/>
</dbReference>
<keyword id="KW-0001">2Fe-2S</keyword>
<keyword id="KW-0249">Electron transport</keyword>
<keyword id="KW-0408">Iron</keyword>
<keyword id="KW-0411">Iron-sulfur</keyword>
<keyword id="KW-0479">Metal-binding</keyword>
<keyword id="KW-1185">Reference proteome</keyword>
<keyword id="KW-0813">Transport</keyword>
<comment type="function">
    <text evidence="1">Ferredoxin are iron-sulfur proteins that transfer electrons in a wide variety of metabolic reactions. Although the function of this ferredoxin is unknown it is probable that it has a role as a cellular electron transfer protein. Involved in the in vivo assembly of the Fe-S clusters in a wide variety of iron-sulfur proteins (By similarity).</text>
</comment>
<comment type="cofactor">
    <cofactor evidence="1">
        <name>[2Fe-2S] cluster</name>
        <dbReference type="ChEBI" id="CHEBI:190135"/>
    </cofactor>
    <text evidence="1">Binds 1 [2Fe-2S] cluster.</text>
</comment>
<comment type="similarity">
    <text evidence="3">Belongs to the adrenodoxin/putidaredoxin family.</text>
</comment>
<name>FER_ECO57</name>
<evidence type="ECO:0000250" key="1"/>
<evidence type="ECO:0000255" key="2">
    <source>
        <dbReference type="PROSITE-ProRule" id="PRU00465"/>
    </source>
</evidence>
<evidence type="ECO:0000305" key="3"/>
<sequence length="111" mass="12331">MPKIVILPHQDLCPDGAVLEANSGETILDAALRNGIEIEHACEKSCACTTCHCIVREGFDSLPESSEQEDDMLDKAWGLEPESRLSCQARVTDEDLVVEIPRYTINHAREH</sequence>